<evidence type="ECO:0000269" key="1">
    <source>
    </source>
</evidence>
<evidence type="ECO:0000269" key="2">
    <source>
    </source>
</evidence>
<evidence type="ECO:0000269" key="3">
    <source>
    </source>
</evidence>
<evidence type="ECO:0000269" key="4">
    <source>
    </source>
</evidence>
<evidence type="ECO:0000305" key="5"/>
<evidence type="ECO:0007829" key="6">
    <source>
        <dbReference type="PDB" id="5XYN"/>
    </source>
</evidence>
<comment type="function">
    <text evidence="1 2 3 4">Plays a role in a RAD51/RAD54-dependent homologous recombination repair (HRR) pathway to repair MMS-induced lesions during S-phase. Required for error-free repair of spontaneous and induced DNA lesions to protect the genome from mutation.</text>
</comment>
<comment type="subunit">
    <text evidence="2 4">Component of the SHU complex composed of at least CSM2, PSY3, SHU1 and SHU2.</text>
</comment>
<comment type="subcellular location">
    <subcellularLocation>
        <location evidence="5">Nucleus</location>
    </subcellularLocation>
</comment>
<comment type="similarity">
    <text evidence="5">Belongs to the SHU2 family.</text>
</comment>
<gene>
    <name type="primary">SHU2</name>
    <name type="ordered locus">YDR078C</name>
    <name type="ORF">D4436</name>
</gene>
<reference key="1">
    <citation type="journal article" date="1997" name="Nature">
        <title>The nucleotide sequence of Saccharomyces cerevisiae chromosome IV.</title>
        <authorList>
            <person name="Jacq C."/>
            <person name="Alt-Moerbe J."/>
            <person name="Andre B."/>
            <person name="Arnold W."/>
            <person name="Bahr A."/>
            <person name="Ballesta J.P.G."/>
            <person name="Bargues M."/>
            <person name="Baron L."/>
            <person name="Becker A."/>
            <person name="Biteau N."/>
            <person name="Bloecker H."/>
            <person name="Blugeon C."/>
            <person name="Boskovic J."/>
            <person name="Brandt P."/>
            <person name="Brueckner M."/>
            <person name="Buitrago M.J."/>
            <person name="Coster F."/>
            <person name="Delaveau T."/>
            <person name="del Rey F."/>
            <person name="Dujon B."/>
            <person name="Eide L.G."/>
            <person name="Garcia-Cantalejo J.M."/>
            <person name="Goffeau A."/>
            <person name="Gomez-Peris A."/>
            <person name="Granotier C."/>
            <person name="Hanemann V."/>
            <person name="Hankeln T."/>
            <person name="Hoheisel J.D."/>
            <person name="Jaeger W."/>
            <person name="Jimenez A."/>
            <person name="Jonniaux J.-L."/>
            <person name="Kraemer C."/>
            <person name="Kuester H."/>
            <person name="Laamanen P."/>
            <person name="Legros Y."/>
            <person name="Louis E.J."/>
            <person name="Moeller-Rieker S."/>
            <person name="Monnet A."/>
            <person name="Moro M."/>
            <person name="Mueller-Auer S."/>
            <person name="Nussbaumer B."/>
            <person name="Paricio N."/>
            <person name="Paulin L."/>
            <person name="Perea J."/>
            <person name="Perez-Alonso M."/>
            <person name="Perez-Ortin J.E."/>
            <person name="Pohl T.M."/>
            <person name="Prydz H."/>
            <person name="Purnelle B."/>
            <person name="Rasmussen S.W."/>
            <person name="Remacha M.A."/>
            <person name="Revuelta J.L."/>
            <person name="Rieger M."/>
            <person name="Salom D."/>
            <person name="Saluz H.P."/>
            <person name="Saiz J.E."/>
            <person name="Saren A.-M."/>
            <person name="Schaefer M."/>
            <person name="Scharfe M."/>
            <person name="Schmidt E.R."/>
            <person name="Schneider C."/>
            <person name="Scholler P."/>
            <person name="Schwarz S."/>
            <person name="Soler-Mira A."/>
            <person name="Urrestarazu L.A."/>
            <person name="Verhasselt P."/>
            <person name="Vissers S."/>
            <person name="Voet M."/>
            <person name="Volckaert G."/>
            <person name="Wagner G."/>
            <person name="Wambutt R."/>
            <person name="Wedler E."/>
            <person name="Wedler H."/>
            <person name="Woelfl S."/>
            <person name="Harris D.E."/>
            <person name="Bowman S."/>
            <person name="Brown D."/>
            <person name="Churcher C.M."/>
            <person name="Connor R."/>
            <person name="Dedman K."/>
            <person name="Gentles S."/>
            <person name="Hamlin N."/>
            <person name="Hunt S."/>
            <person name="Jones L."/>
            <person name="McDonald S."/>
            <person name="Murphy L.D."/>
            <person name="Niblett D."/>
            <person name="Odell C."/>
            <person name="Oliver K."/>
            <person name="Rajandream M.A."/>
            <person name="Richards C."/>
            <person name="Shore L."/>
            <person name="Walsh S.V."/>
            <person name="Barrell B.G."/>
            <person name="Dietrich F.S."/>
            <person name="Mulligan J.T."/>
            <person name="Allen E."/>
            <person name="Araujo R."/>
            <person name="Aviles E."/>
            <person name="Berno A."/>
            <person name="Carpenter J."/>
            <person name="Chen E."/>
            <person name="Cherry J.M."/>
            <person name="Chung E."/>
            <person name="Duncan M."/>
            <person name="Hunicke-Smith S."/>
            <person name="Hyman R.W."/>
            <person name="Komp C."/>
            <person name="Lashkari D."/>
            <person name="Lew H."/>
            <person name="Lin D."/>
            <person name="Mosedale D."/>
            <person name="Nakahara K."/>
            <person name="Namath A."/>
            <person name="Oefner P."/>
            <person name="Oh C."/>
            <person name="Petel F.X."/>
            <person name="Roberts D."/>
            <person name="Schramm S."/>
            <person name="Schroeder M."/>
            <person name="Shogren T."/>
            <person name="Shroff N."/>
            <person name="Winant A."/>
            <person name="Yelton M.A."/>
            <person name="Botstein D."/>
            <person name="Davis R.W."/>
            <person name="Johnston M."/>
            <person name="Andrews S."/>
            <person name="Brinkman R."/>
            <person name="Cooper J."/>
            <person name="Ding H."/>
            <person name="Du Z."/>
            <person name="Favello A."/>
            <person name="Fulton L."/>
            <person name="Gattung S."/>
            <person name="Greco T."/>
            <person name="Hallsworth K."/>
            <person name="Hawkins J."/>
            <person name="Hillier L.W."/>
            <person name="Jier M."/>
            <person name="Johnson D."/>
            <person name="Johnston L."/>
            <person name="Kirsten J."/>
            <person name="Kucaba T."/>
            <person name="Langston Y."/>
            <person name="Latreille P."/>
            <person name="Le T."/>
            <person name="Mardis E."/>
            <person name="Menezes S."/>
            <person name="Miller N."/>
            <person name="Nhan M."/>
            <person name="Pauley A."/>
            <person name="Peluso D."/>
            <person name="Rifkin L."/>
            <person name="Riles L."/>
            <person name="Taich A."/>
            <person name="Trevaskis E."/>
            <person name="Vignati D."/>
            <person name="Wilcox L."/>
            <person name="Wohldman P."/>
            <person name="Vaudin M."/>
            <person name="Wilson R."/>
            <person name="Waterston R."/>
            <person name="Albermann K."/>
            <person name="Hani J."/>
            <person name="Heumann K."/>
            <person name="Kleine K."/>
            <person name="Mewes H.-W."/>
            <person name="Zollner A."/>
            <person name="Zaccaria P."/>
        </authorList>
    </citation>
    <scope>NUCLEOTIDE SEQUENCE [LARGE SCALE GENOMIC DNA]</scope>
    <source>
        <strain>ATCC 204508 / S288c</strain>
    </source>
</reference>
<reference key="2">
    <citation type="journal article" date="2014" name="G3 (Bethesda)">
        <title>The reference genome sequence of Saccharomyces cerevisiae: Then and now.</title>
        <authorList>
            <person name="Engel S.R."/>
            <person name="Dietrich F.S."/>
            <person name="Fisk D.G."/>
            <person name="Binkley G."/>
            <person name="Balakrishnan R."/>
            <person name="Costanzo M.C."/>
            <person name="Dwight S.S."/>
            <person name="Hitz B.C."/>
            <person name="Karra K."/>
            <person name="Nash R.S."/>
            <person name="Weng S."/>
            <person name="Wong E.D."/>
            <person name="Lloyd P."/>
            <person name="Skrzypek M.S."/>
            <person name="Miyasato S.R."/>
            <person name="Simison M."/>
            <person name="Cherry J.M."/>
        </authorList>
    </citation>
    <scope>GENOME REANNOTATION</scope>
    <source>
        <strain>ATCC 204508 / S288c</strain>
    </source>
</reference>
<reference key="3">
    <citation type="journal article" date="2007" name="Genome Res.">
        <title>Approaching a complete repository of sequence-verified protein-encoding clones for Saccharomyces cerevisiae.</title>
        <authorList>
            <person name="Hu Y."/>
            <person name="Rolfs A."/>
            <person name="Bhullar B."/>
            <person name="Murthy T.V.S."/>
            <person name="Zhu C."/>
            <person name="Berger M.F."/>
            <person name="Camargo A.A."/>
            <person name="Kelley F."/>
            <person name="McCarron S."/>
            <person name="Jepson D."/>
            <person name="Richardson A."/>
            <person name="Raphael J."/>
            <person name="Moreira D."/>
            <person name="Taycher E."/>
            <person name="Zuo D."/>
            <person name="Mohr S."/>
            <person name="Kane M.F."/>
            <person name="Williamson J."/>
            <person name="Simpson A.J.G."/>
            <person name="Bulyk M.L."/>
            <person name="Harlow E."/>
            <person name="Marsischky G."/>
            <person name="Kolodner R.D."/>
            <person name="LaBaer J."/>
        </authorList>
    </citation>
    <scope>NUCLEOTIDE SEQUENCE [GENOMIC DNA]</scope>
    <source>
        <strain>ATCC 204508 / S288c</strain>
    </source>
</reference>
<reference key="4">
    <citation type="journal article" date="2003" name="Proc. Natl. Acad. Sci. U.S.A.">
        <title>A genomewide screen in Saccharomyces cerevisiae for genes that suppress the accumulation of mutations.</title>
        <authorList>
            <person name="Huang M.-E."/>
            <person name="Rio A.-G."/>
            <person name="Nicolas A."/>
            <person name="Kolodner R.D."/>
        </authorList>
    </citation>
    <scope>FUNCTION</scope>
</reference>
<reference key="5">
    <citation type="journal article" date="2005" name="Genetics">
        <title>A genetic screen for top3 suppressors in Saccharomyces cerevisiae identifies SHU1, SHU2, PSY3 and CSM2: four genes involved in error-free DNA repair.</title>
        <authorList>
            <person name="Shor E."/>
            <person name="Weinstein J."/>
            <person name="Rothstein R."/>
        </authorList>
    </citation>
    <scope>IDENTIFICATION IN THE SHU COMPLEX</scope>
    <scope>FUNCTION</scope>
</reference>
<reference key="6">
    <citation type="journal article" date="2007" name="Mol. Biol. Cell">
        <title>Shu proteins promote the formation of homologous recombination intermediates that are processed by Sgs1-Rmi1-Top3.</title>
        <authorList>
            <person name="Mankouri H.W."/>
            <person name="Ngo H.P."/>
            <person name="Hickson I.D."/>
        </authorList>
    </citation>
    <scope>FUNCTION</scope>
</reference>
<reference key="7">
    <citation type="journal article" date="2009" name="Mol. Microbiol.">
        <title>The yeast Shu complex couples error-free post-replication repair to homologous recombination.</title>
        <authorList>
            <person name="Ball L.G."/>
            <person name="Zhang K."/>
            <person name="Cobb J.A."/>
            <person name="Boone C."/>
            <person name="Xiao W."/>
        </authorList>
    </citation>
    <scope>IDENTIFICATION IN THE SHU COMPLEX</scope>
    <scope>FUNCTION</scope>
</reference>
<feature type="chain" id="PRO_0000202593" description="Suppressor of hydroxyurea sensitivity protein 2">
    <location>
        <begin position="1"/>
        <end position="223"/>
    </location>
</feature>
<feature type="helix" evidence="6">
    <location>
        <begin position="8"/>
        <end position="13"/>
    </location>
</feature>
<feature type="helix" evidence="6">
    <location>
        <begin position="26"/>
        <end position="35"/>
    </location>
</feature>
<feature type="helix" evidence="6">
    <location>
        <begin position="40"/>
        <end position="49"/>
    </location>
</feature>
<feature type="strand" evidence="6">
    <location>
        <begin position="53"/>
        <end position="57"/>
    </location>
</feature>
<feature type="helix" evidence="6">
    <location>
        <begin position="72"/>
        <end position="81"/>
    </location>
</feature>
<feature type="strand" evidence="6">
    <location>
        <begin position="91"/>
        <end position="95"/>
    </location>
</feature>
<feature type="strand" evidence="6">
    <location>
        <begin position="100"/>
        <end position="102"/>
    </location>
</feature>
<feature type="strand" evidence="6">
    <location>
        <begin position="105"/>
        <end position="108"/>
    </location>
</feature>
<feature type="turn" evidence="6">
    <location>
        <begin position="109"/>
        <end position="112"/>
    </location>
</feature>
<feature type="helix" evidence="6">
    <location>
        <begin position="117"/>
        <end position="128"/>
    </location>
</feature>
<feature type="strand" evidence="6">
    <location>
        <begin position="132"/>
        <end position="134"/>
    </location>
</feature>
<feature type="helix" evidence="6">
    <location>
        <begin position="136"/>
        <end position="140"/>
    </location>
</feature>
<feature type="strand" evidence="6">
    <location>
        <begin position="141"/>
        <end position="144"/>
    </location>
</feature>
<feature type="helix" evidence="6">
    <location>
        <begin position="147"/>
        <end position="149"/>
    </location>
</feature>
<feature type="strand" evidence="6">
    <location>
        <begin position="166"/>
        <end position="169"/>
    </location>
</feature>
<feature type="turn" evidence="6">
    <location>
        <begin position="171"/>
        <end position="173"/>
    </location>
</feature>
<feature type="helix" evidence="6">
    <location>
        <begin position="177"/>
        <end position="186"/>
    </location>
</feature>
<feature type="helix" evidence="6">
    <location>
        <begin position="190"/>
        <end position="195"/>
    </location>
</feature>
<feature type="turn" evidence="6">
    <location>
        <begin position="196"/>
        <end position="198"/>
    </location>
</feature>
<feature type="strand" evidence="6">
    <location>
        <begin position="202"/>
        <end position="207"/>
    </location>
</feature>
<feature type="helix" evidence="6">
    <location>
        <begin position="211"/>
        <end position="217"/>
    </location>
</feature>
<feature type="turn" evidence="6">
    <location>
        <begin position="219"/>
        <end position="221"/>
    </location>
</feature>
<keyword id="KW-0002">3D-structure</keyword>
<keyword id="KW-0227">DNA damage</keyword>
<keyword id="KW-0233">DNA recombination</keyword>
<keyword id="KW-0234">DNA repair</keyword>
<keyword id="KW-0539">Nucleus</keyword>
<keyword id="KW-1185">Reference proteome</keyword>
<sequence length="223" mass="26123">MSKDVIEYSKLFAKLVNTNDDTKLDDTIASFLYYMFPRELFIRAISLLESSDMFIYILDRVHNKEGNEHTSLIDVLVDEFYKGSSNSLLEYRLIVKDTNDGAPPILVDIAHWFCSCEEFCKYFHEALEKTDEKEELHDVLINEVDDHLQFSDDRFAQLDPHSLSKQWYFKFDKVCCSHLLAFSILLRSSINVLKFFTVNSNKVFVIAIDNIDEWLNLHINIVE</sequence>
<dbReference type="EMBL" id="Z46796">
    <property type="protein sequence ID" value="CAA86800.1"/>
    <property type="molecule type" value="Genomic_DNA"/>
</dbReference>
<dbReference type="EMBL" id="X82086">
    <property type="protein sequence ID" value="CAA57605.1"/>
    <property type="molecule type" value="Genomic_DNA"/>
</dbReference>
<dbReference type="EMBL" id="Z74374">
    <property type="protein sequence ID" value="CAA98897.1"/>
    <property type="molecule type" value="Genomic_DNA"/>
</dbReference>
<dbReference type="EMBL" id="AY557677">
    <property type="protein sequence ID" value="AAS56003.1"/>
    <property type="molecule type" value="Genomic_DNA"/>
</dbReference>
<dbReference type="EMBL" id="BK006938">
    <property type="protein sequence ID" value="DAA11924.1"/>
    <property type="molecule type" value="Genomic_DNA"/>
</dbReference>
<dbReference type="PIR" id="S48765">
    <property type="entry name" value="S48765"/>
</dbReference>
<dbReference type="RefSeq" id="NP_010363.1">
    <property type="nucleotide sequence ID" value="NM_001180386.1"/>
</dbReference>
<dbReference type="PDB" id="5XYN">
    <property type="method" value="X-ray"/>
    <property type="resolution" value="3.30 A"/>
    <property type="chains" value="D=1-223"/>
</dbReference>
<dbReference type="PDBsum" id="5XYN"/>
<dbReference type="SMR" id="P38957"/>
<dbReference type="BioGRID" id="32133">
    <property type="interactions" value="47"/>
</dbReference>
<dbReference type="ComplexPortal" id="CPX-3087">
    <property type="entry name" value="Shu complex"/>
</dbReference>
<dbReference type="DIP" id="DIP-1370N"/>
<dbReference type="FunCoup" id="P38957">
    <property type="interactions" value="30"/>
</dbReference>
<dbReference type="IntAct" id="P38957">
    <property type="interactions" value="6"/>
</dbReference>
<dbReference type="MINT" id="P38957"/>
<dbReference type="STRING" id="4932.YDR078C"/>
<dbReference type="PaxDb" id="4932-YDR078C"/>
<dbReference type="EnsemblFungi" id="YDR078C_mRNA">
    <property type="protein sequence ID" value="YDR078C"/>
    <property type="gene ID" value="YDR078C"/>
</dbReference>
<dbReference type="GeneID" id="851650"/>
<dbReference type="KEGG" id="sce:YDR078C"/>
<dbReference type="AGR" id="SGD:S000002485"/>
<dbReference type="SGD" id="S000002485">
    <property type="gene designation" value="SHU2"/>
</dbReference>
<dbReference type="VEuPathDB" id="FungiDB:YDR078C"/>
<dbReference type="eggNOG" id="ENOG502S0XB">
    <property type="taxonomic scope" value="Eukaryota"/>
</dbReference>
<dbReference type="HOGENOM" id="CLU_1115918_0_0_1"/>
<dbReference type="InParanoid" id="P38957"/>
<dbReference type="OMA" id="WLKLHLN"/>
<dbReference type="OrthoDB" id="4066852at2759"/>
<dbReference type="BioCyc" id="YEAST:G3O-29683-MONOMER"/>
<dbReference type="BioGRID-ORCS" id="851650">
    <property type="hits" value="1 hit in 10 CRISPR screens"/>
</dbReference>
<dbReference type="PRO" id="PR:P38957"/>
<dbReference type="Proteomes" id="UP000002311">
    <property type="component" value="Chromosome IV"/>
</dbReference>
<dbReference type="RNAct" id="P38957">
    <property type="molecule type" value="protein"/>
</dbReference>
<dbReference type="GO" id="GO:0005634">
    <property type="term" value="C:nucleus"/>
    <property type="evidence" value="ECO:0007669"/>
    <property type="project" value="UniProtKB-SubCell"/>
</dbReference>
<dbReference type="GO" id="GO:0097196">
    <property type="term" value="C:Shu complex"/>
    <property type="evidence" value="ECO:0000314"/>
    <property type="project" value="SGD"/>
</dbReference>
<dbReference type="GO" id="GO:0035861">
    <property type="term" value="C:site of double-strand break"/>
    <property type="evidence" value="ECO:0000315"/>
    <property type="project" value="SGD"/>
</dbReference>
<dbReference type="GO" id="GO:0000730">
    <property type="term" value="P:DNA recombinase assembly"/>
    <property type="evidence" value="ECO:0000315"/>
    <property type="project" value="SGD"/>
</dbReference>
<dbReference type="GO" id="GO:0042275">
    <property type="term" value="P:error-free postreplication DNA repair"/>
    <property type="evidence" value="ECO:0000303"/>
    <property type="project" value="ComplexPortal"/>
</dbReference>
<dbReference type="GO" id="GO:0043007">
    <property type="term" value="P:maintenance of rDNA"/>
    <property type="evidence" value="ECO:0000316"/>
    <property type="project" value="SGD"/>
</dbReference>
<dbReference type="GO" id="GO:1903112">
    <property type="term" value="P:positive regulation of single-strand break repair via homologous recombination"/>
    <property type="evidence" value="ECO:0000303"/>
    <property type="project" value="ComplexPortal"/>
</dbReference>
<dbReference type="GO" id="GO:0000725">
    <property type="term" value="P:recombinational repair"/>
    <property type="evidence" value="ECO:0000315"/>
    <property type="project" value="SGD"/>
</dbReference>
<organism>
    <name type="scientific">Saccharomyces cerevisiae (strain ATCC 204508 / S288c)</name>
    <name type="common">Baker's yeast</name>
    <dbReference type="NCBI Taxonomy" id="559292"/>
    <lineage>
        <taxon>Eukaryota</taxon>
        <taxon>Fungi</taxon>
        <taxon>Dikarya</taxon>
        <taxon>Ascomycota</taxon>
        <taxon>Saccharomycotina</taxon>
        <taxon>Saccharomycetes</taxon>
        <taxon>Saccharomycetales</taxon>
        <taxon>Saccharomycetaceae</taxon>
        <taxon>Saccharomyces</taxon>
    </lineage>
</organism>
<accession>P38957</accession>
<accession>D6VS64</accession>
<protein>
    <recommendedName>
        <fullName>Suppressor of hydroxyurea sensitivity protein 2</fullName>
    </recommendedName>
</protein>
<proteinExistence type="evidence at protein level"/>
<name>SHU2_YEAST</name>